<sequence>MSEVKIGKNESLDAALRRFKRICQKSGVLSEARRREHYEKPSVRRKKKSEAARKRRWH</sequence>
<gene>
    <name evidence="1" type="primary">rpsU</name>
    <name type="ordered locus">Moth_0590</name>
</gene>
<evidence type="ECO:0000255" key="1">
    <source>
        <dbReference type="HAMAP-Rule" id="MF_00358"/>
    </source>
</evidence>
<evidence type="ECO:0000256" key="2">
    <source>
        <dbReference type="SAM" id="MobiDB-lite"/>
    </source>
</evidence>
<evidence type="ECO:0000305" key="3"/>
<dbReference type="EMBL" id="CP000232">
    <property type="protein sequence ID" value="ABC18920.1"/>
    <property type="molecule type" value="Genomic_DNA"/>
</dbReference>
<dbReference type="RefSeq" id="YP_429463.1">
    <property type="nucleotide sequence ID" value="NC_007644.1"/>
</dbReference>
<dbReference type="SMR" id="Q2RKW9"/>
<dbReference type="STRING" id="264732.Moth_0590"/>
<dbReference type="EnsemblBacteria" id="ABC18920">
    <property type="protein sequence ID" value="ABC18920"/>
    <property type="gene ID" value="Moth_0590"/>
</dbReference>
<dbReference type="KEGG" id="mta:Moth_0590"/>
<dbReference type="PATRIC" id="fig|264732.11.peg.635"/>
<dbReference type="eggNOG" id="COG0828">
    <property type="taxonomic scope" value="Bacteria"/>
</dbReference>
<dbReference type="HOGENOM" id="CLU_159258_1_2_9"/>
<dbReference type="OrthoDB" id="9799244at2"/>
<dbReference type="GO" id="GO:1990904">
    <property type="term" value="C:ribonucleoprotein complex"/>
    <property type="evidence" value="ECO:0007669"/>
    <property type="project" value="UniProtKB-KW"/>
</dbReference>
<dbReference type="GO" id="GO:0005840">
    <property type="term" value="C:ribosome"/>
    <property type="evidence" value="ECO:0007669"/>
    <property type="project" value="UniProtKB-KW"/>
</dbReference>
<dbReference type="GO" id="GO:0003735">
    <property type="term" value="F:structural constituent of ribosome"/>
    <property type="evidence" value="ECO:0007669"/>
    <property type="project" value="InterPro"/>
</dbReference>
<dbReference type="GO" id="GO:0006412">
    <property type="term" value="P:translation"/>
    <property type="evidence" value="ECO:0007669"/>
    <property type="project" value="UniProtKB-UniRule"/>
</dbReference>
<dbReference type="Gene3D" id="1.20.5.1150">
    <property type="entry name" value="Ribosomal protein S8"/>
    <property type="match status" value="1"/>
</dbReference>
<dbReference type="HAMAP" id="MF_00358">
    <property type="entry name" value="Ribosomal_bS21"/>
    <property type="match status" value="1"/>
</dbReference>
<dbReference type="InterPro" id="IPR001911">
    <property type="entry name" value="Ribosomal_bS21"/>
</dbReference>
<dbReference type="InterPro" id="IPR018278">
    <property type="entry name" value="Ribosomal_bS21_CS"/>
</dbReference>
<dbReference type="InterPro" id="IPR038380">
    <property type="entry name" value="Ribosomal_bS21_sf"/>
</dbReference>
<dbReference type="NCBIfam" id="TIGR00030">
    <property type="entry name" value="S21p"/>
    <property type="match status" value="1"/>
</dbReference>
<dbReference type="PANTHER" id="PTHR21109">
    <property type="entry name" value="MITOCHONDRIAL 28S RIBOSOMAL PROTEIN S21"/>
    <property type="match status" value="1"/>
</dbReference>
<dbReference type="PANTHER" id="PTHR21109:SF22">
    <property type="entry name" value="SMALL RIBOSOMAL SUBUNIT PROTEIN BS21"/>
    <property type="match status" value="1"/>
</dbReference>
<dbReference type="Pfam" id="PF01165">
    <property type="entry name" value="Ribosomal_S21"/>
    <property type="match status" value="1"/>
</dbReference>
<dbReference type="PRINTS" id="PR00976">
    <property type="entry name" value="RIBOSOMALS21"/>
</dbReference>
<dbReference type="PROSITE" id="PS01181">
    <property type="entry name" value="RIBOSOMAL_S21"/>
    <property type="match status" value="1"/>
</dbReference>
<accession>Q2RKW9</accession>
<feature type="chain" id="PRO_0000266707" description="Small ribosomal subunit protein bS21">
    <location>
        <begin position="1"/>
        <end position="58"/>
    </location>
</feature>
<feature type="region of interest" description="Disordered" evidence="2">
    <location>
        <begin position="32"/>
        <end position="58"/>
    </location>
</feature>
<feature type="compositionally biased region" description="Basic and acidic residues" evidence="2">
    <location>
        <begin position="32"/>
        <end position="42"/>
    </location>
</feature>
<feature type="compositionally biased region" description="Basic residues" evidence="2">
    <location>
        <begin position="43"/>
        <end position="58"/>
    </location>
</feature>
<keyword id="KW-0687">Ribonucleoprotein</keyword>
<keyword id="KW-0689">Ribosomal protein</keyword>
<reference key="1">
    <citation type="journal article" date="2008" name="Environ. Microbiol.">
        <title>The complete genome sequence of Moorella thermoacetica (f. Clostridium thermoaceticum).</title>
        <authorList>
            <person name="Pierce E."/>
            <person name="Xie G."/>
            <person name="Barabote R.D."/>
            <person name="Saunders E."/>
            <person name="Han C.S."/>
            <person name="Detter J.C."/>
            <person name="Richardson P."/>
            <person name="Brettin T.S."/>
            <person name="Das A."/>
            <person name="Ljungdahl L.G."/>
            <person name="Ragsdale S.W."/>
        </authorList>
    </citation>
    <scope>NUCLEOTIDE SEQUENCE [LARGE SCALE GENOMIC DNA]</scope>
    <source>
        <strain>ATCC 39073 / JCM 9320</strain>
    </source>
</reference>
<protein>
    <recommendedName>
        <fullName evidence="1">Small ribosomal subunit protein bS21</fullName>
    </recommendedName>
    <alternativeName>
        <fullName evidence="3">30S ribosomal protein S21</fullName>
    </alternativeName>
</protein>
<organism>
    <name type="scientific">Moorella thermoacetica (strain ATCC 39073 / JCM 9320)</name>
    <dbReference type="NCBI Taxonomy" id="264732"/>
    <lineage>
        <taxon>Bacteria</taxon>
        <taxon>Bacillati</taxon>
        <taxon>Bacillota</taxon>
        <taxon>Clostridia</taxon>
        <taxon>Moorellales</taxon>
        <taxon>Moorellaceae</taxon>
        <taxon>Moorella</taxon>
    </lineage>
</organism>
<name>RS21_MOOTA</name>
<proteinExistence type="inferred from homology"/>
<comment type="similarity">
    <text evidence="1">Belongs to the bacterial ribosomal protein bS21 family.</text>
</comment>